<evidence type="ECO:0000255" key="1">
    <source>
        <dbReference type="HAMAP-Rule" id="MF_00412"/>
    </source>
</evidence>
<comment type="function">
    <text evidence="1">Catalyzes the NADPH-dependent reduction of L-glutamate 5-phosphate into L-glutamate 5-semialdehyde and phosphate. The product spontaneously undergoes cyclization to form 1-pyrroline-5-carboxylate.</text>
</comment>
<comment type="catalytic activity">
    <reaction evidence="1">
        <text>L-glutamate 5-semialdehyde + phosphate + NADP(+) = L-glutamyl 5-phosphate + NADPH + H(+)</text>
        <dbReference type="Rhea" id="RHEA:19541"/>
        <dbReference type="ChEBI" id="CHEBI:15378"/>
        <dbReference type="ChEBI" id="CHEBI:43474"/>
        <dbReference type="ChEBI" id="CHEBI:57783"/>
        <dbReference type="ChEBI" id="CHEBI:58066"/>
        <dbReference type="ChEBI" id="CHEBI:58274"/>
        <dbReference type="ChEBI" id="CHEBI:58349"/>
        <dbReference type="EC" id="1.2.1.41"/>
    </reaction>
</comment>
<comment type="pathway">
    <text evidence="1">Amino-acid biosynthesis; L-proline biosynthesis; L-glutamate 5-semialdehyde from L-glutamate: step 2/2.</text>
</comment>
<comment type="subcellular location">
    <subcellularLocation>
        <location evidence="1">Cytoplasm</location>
    </subcellularLocation>
</comment>
<comment type="similarity">
    <text evidence="1">Belongs to the gamma-glutamyl phosphate reductase family.</text>
</comment>
<keyword id="KW-0028">Amino-acid biosynthesis</keyword>
<keyword id="KW-0963">Cytoplasm</keyword>
<keyword id="KW-0521">NADP</keyword>
<keyword id="KW-0560">Oxidoreductase</keyword>
<keyword id="KW-0641">Proline biosynthesis</keyword>
<keyword id="KW-1185">Reference proteome</keyword>
<sequence length="436" mass="47749">MANIFEVPNPGNDLLEKADKVRLASIKISQTENIDRIKALNFMADCLEKNSKEILEANSADYSSAEKKGISRALLSRLKLSKAKLNSGIEGVRKVGELADPVNQIQIKRELSNGLILERKTVPIGVLGVIFESRPDAVMQISSLAIRSGNGVILKGGSEANLTNTSIVKALQEGLDESGLDKNAICLLTSRKDSMAMLNLEKYINLIIPRGSNELVKFIQENTRIPVLGHADGICHLFIDIEANLEMALSVALDSKIQYPAACNAIETLLVHKDIAPAFLEKAIPLFNSNDVKLIGDRKSVELGLEHEASAEDWQTEYLDLILSIKIVDDLDEAIIHIQKYSSKHTDGIITENLKTANRFMNVVDSAGVFHNCSTRFADGFRYGFGAEVGISTQTLPPRGPVGLEGLVTYKYFLKGDGNIVDDFSLGKAIYTHKDL</sequence>
<protein>
    <recommendedName>
        <fullName evidence="1">Gamma-glutamyl phosphate reductase</fullName>
        <shortName evidence="1">GPR</shortName>
        <ecNumber evidence="1">1.2.1.41</ecNumber>
    </recommendedName>
    <alternativeName>
        <fullName evidence="1">Glutamate-5-semialdehyde dehydrogenase</fullName>
    </alternativeName>
    <alternativeName>
        <fullName evidence="1">Glutamyl-gamma-semialdehyde dehydrogenase</fullName>
        <shortName evidence="1">GSA dehydrogenase</shortName>
    </alternativeName>
</protein>
<reference key="1">
    <citation type="journal article" date="2007" name="PLoS Genet.">
        <title>Patterns and implications of gene gain and loss in the evolution of Prochlorococcus.</title>
        <authorList>
            <person name="Kettler G.C."/>
            <person name="Martiny A.C."/>
            <person name="Huang K."/>
            <person name="Zucker J."/>
            <person name="Coleman M.L."/>
            <person name="Rodrigue S."/>
            <person name="Chen F."/>
            <person name="Lapidus A."/>
            <person name="Ferriera S."/>
            <person name="Johnson J."/>
            <person name="Steglich C."/>
            <person name="Church G.M."/>
            <person name="Richardson P."/>
            <person name="Chisholm S.W."/>
        </authorList>
    </citation>
    <scope>NUCLEOTIDE SEQUENCE [LARGE SCALE GENOMIC DNA]</scope>
    <source>
        <strain>MIT 9301</strain>
    </source>
</reference>
<proteinExistence type="inferred from homology"/>
<accession>A3PBW4</accession>
<name>PROA_PROM0</name>
<dbReference type="EC" id="1.2.1.41" evidence="1"/>
<dbReference type="EMBL" id="CP000576">
    <property type="protein sequence ID" value="ABO17239.1"/>
    <property type="molecule type" value="Genomic_DNA"/>
</dbReference>
<dbReference type="RefSeq" id="WP_011862606.1">
    <property type="nucleotide sequence ID" value="NC_009091.1"/>
</dbReference>
<dbReference type="SMR" id="A3PBW4"/>
<dbReference type="STRING" id="167546.P9301_06161"/>
<dbReference type="KEGG" id="pmg:P9301_06161"/>
<dbReference type="eggNOG" id="COG0014">
    <property type="taxonomic scope" value="Bacteria"/>
</dbReference>
<dbReference type="HOGENOM" id="CLU_030231_0_1_3"/>
<dbReference type="OrthoDB" id="9809970at2"/>
<dbReference type="UniPathway" id="UPA00098">
    <property type="reaction ID" value="UER00360"/>
</dbReference>
<dbReference type="Proteomes" id="UP000001430">
    <property type="component" value="Chromosome"/>
</dbReference>
<dbReference type="GO" id="GO:0005737">
    <property type="term" value="C:cytoplasm"/>
    <property type="evidence" value="ECO:0007669"/>
    <property type="project" value="UniProtKB-SubCell"/>
</dbReference>
<dbReference type="GO" id="GO:0004350">
    <property type="term" value="F:glutamate-5-semialdehyde dehydrogenase activity"/>
    <property type="evidence" value="ECO:0007669"/>
    <property type="project" value="UniProtKB-UniRule"/>
</dbReference>
<dbReference type="GO" id="GO:0050661">
    <property type="term" value="F:NADP binding"/>
    <property type="evidence" value="ECO:0007669"/>
    <property type="project" value="InterPro"/>
</dbReference>
<dbReference type="GO" id="GO:0055129">
    <property type="term" value="P:L-proline biosynthetic process"/>
    <property type="evidence" value="ECO:0007669"/>
    <property type="project" value="UniProtKB-UniRule"/>
</dbReference>
<dbReference type="CDD" id="cd07079">
    <property type="entry name" value="ALDH_F18-19_ProA-GPR"/>
    <property type="match status" value="1"/>
</dbReference>
<dbReference type="FunFam" id="3.40.309.10:FF:000006">
    <property type="entry name" value="Gamma-glutamyl phosphate reductase"/>
    <property type="match status" value="1"/>
</dbReference>
<dbReference type="Gene3D" id="3.40.605.10">
    <property type="entry name" value="Aldehyde Dehydrogenase, Chain A, domain 1"/>
    <property type="match status" value="1"/>
</dbReference>
<dbReference type="Gene3D" id="3.40.309.10">
    <property type="entry name" value="Aldehyde Dehydrogenase, Chain A, domain 2"/>
    <property type="match status" value="1"/>
</dbReference>
<dbReference type="HAMAP" id="MF_00412">
    <property type="entry name" value="ProA"/>
    <property type="match status" value="1"/>
</dbReference>
<dbReference type="InterPro" id="IPR016161">
    <property type="entry name" value="Ald_DH/histidinol_DH"/>
</dbReference>
<dbReference type="InterPro" id="IPR016163">
    <property type="entry name" value="Ald_DH_C"/>
</dbReference>
<dbReference type="InterPro" id="IPR016162">
    <property type="entry name" value="Ald_DH_N"/>
</dbReference>
<dbReference type="InterPro" id="IPR015590">
    <property type="entry name" value="Aldehyde_DH_dom"/>
</dbReference>
<dbReference type="InterPro" id="IPR020593">
    <property type="entry name" value="G-glutamylP_reductase_CS"/>
</dbReference>
<dbReference type="InterPro" id="IPR012134">
    <property type="entry name" value="Glu-5-SA_DH"/>
</dbReference>
<dbReference type="InterPro" id="IPR000965">
    <property type="entry name" value="GPR_dom"/>
</dbReference>
<dbReference type="NCBIfam" id="NF001221">
    <property type="entry name" value="PRK00197.1"/>
    <property type="match status" value="1"/>
</dbReference>
<dbReference type="NCBIfam" id="TIGR00407">
    <property type="entry name" value="proA"/>
    <property type="match status" value="1"/>
</dbReference>
<dbReference type="PANTHER" id="PTHR11063:SF8">
    <property type="entry name" value="DELTA-1-PYRROLINE-5-CARBOXYLATE SYNTHASE"/>
    <property type="match status" value="1"/>
</dbReference>
<dbReference type="PANTHER" id="PTHR11063">
    <property type="entry name" value="GLUTAMATE SEMIALDEHYDE DEHYDROGENASE"/>
    <property type="match status" value="1"/>
</dbReference>
<dbReference type="Pfam" id="PF00171">
    <property type="entry name" value="Aldedh"/>
    <property type="match status" value="1"/>
</dbReference>
<dbReference type="PIRSF" id="PIRSF000151">
    <property type="entry name" value="GPR"/>
    <property type="match status" value="1"/>
</dbReference>
<dbReference type="SUPFAM" id="SSF53720">
    <property type="entry name" value="ALDH-like"/>
    <property type="match status" value="1"/>
</dbReference>
<dbReference type="PROSITE" id="PS01223">
    <property type="entry name" value="PROA"/>
    <property type="match status" value="1"/>
</dbReference>
<feature type="chain" id="PRO_1000049976" description="Gamma-glutamyl phosphate reductase">
    <location>
        <begin position="1"/>
        <end position="436"/>
    </location>
</feature>
<gene>
    <name evidence="1" type="primary">proA</name>
    <name type="ordered locus">P9301_06161</name>
</gene>
<organism>
    <name type="scientific">Prochlorococcus marinus (strain MIT 9301)</name>
    <dbReference type="NCBI Taxonomy" id="167546"/>
    <lineage>
        <taxon>Bacteria</taxon>
        <taxon>Bacillati</taxon>
        <taxon>Cyanobacteriota</taxon>
        <taxon>Cyanophyceae</taxon>
        <taxon>Synechococcales</taxon>
        <taxon>Prochlorococcaceae</taxon>
        <taxon>Prochlorococcus</taxon>
    </lineage>
</organism>